<comment type="function">
    <text evidence="3">Capsid-specific restriction factor that prevents infection from non-host-adapted retroviruses. Blocks viral replication early in the life cycle, after viral entry but before reverse transcription. In addition to acting as a capsid-specific restriction factor, also acts as a pattern recognition receptor that activates innate immune signaling in response to the retroviral capsid lattice. Binding to the viral capsid triggers its E3 ubiquitin ligase activity, and in concert with the heterodimeric ubiquitin conjugating enzyme complex UBE2V1-UBE2N (also known as UBC13-UEV1A complex) generates 'Lys-63'-linked polyubiquitin chains, which in turn are catalysts in the autophosphorylation of the MAP3K7/TAK1 complex (includes TAK1, TAB2, and TAB3). Activation of the MAP3K7/TAK1 complex by autophosphorylation results in the induction and expression of NF-kappa-B and MAPK-responsive inflammatory genes, thereby leading to an innate immune response in the infected cell. Plays a role in regulating autophagy through activation of autophagy regulator BECN1 by causing its dissociation from its inhibitors BCL2 and TAB2.</text>
</comment>
<comment type="catalytic activity">
    <reaction>
        <text>S-ubiquitinyl-[E2 ubiquitin-conjugating enzyme]-L-cysteine + [acceptor protein]-L-lysine = [E2 ubiquitin-conjugating enzyme]-L-cysteine + N(6)-ubiquitinyl-[acceptor protein]-L-lysine.</text>
        <dbReference type="EC" id="2.3.2.27"/>
    </reaction>
</comment>
<comment type="pathway">
    <text>Protein modification; protein ubiquitination.</text>
</comment>
<comment type="subunit">
    <text evidence="2 3">Can form homodimers and homotrimers. In addition to lower-order dimerization, also exhibits a higher-order multimerization and both low- and high-order multimerizations are essential for its restriction activity. Interacts with BTBD1 and BTBD2. Interacts with PSMC4, PSMC5, PSMD7 and HSPA8/HSC70. Interacts (via B30.2/SPRY domain) with HSPA1A/B. Interacts with PSMC2, MAP3K7/TAK1, TAB2 and TAB3. Interacts with SQSTM1. Interacts with TRIM6 and TRIM34. Interacts with ULK1 (phosphorylated form), GABARAP, GABARAPL1, GABARAPL2, MAP1LC3A, MAP1LC3C and BECN1.</text>
</comment>
<comment type="subcellular location">
    <subcellularLocation>
        <location evidence="2">Cytoplasm</location>
    </subcellularLocation>
    <subcellularLocation>
        <location evidence="2">Nucleus</location>
    </subcellularLocation>
    <text evidence="2">Predominantly localizes in cytoplasmic bodies. Localization may be influenced by the coexpression of other TRIM proteins, hence partial nuclear localization is observed in the presence of TRIM22 or TRIM27. In cytoplasmic bodies, colocalizes with proteasomal subunits and SQSTM1.</text>
</comment>
<comment type="domain">
    <text evidence="2 3">The B box-type zinc finger domain and the coiled-coil domain contribute to the higher and low order multimerization respectively which is essential for restriction activity. The coiled coil domain is important for higher order multimerization by promoting the initial dimerization.</text>
</comment>
<comment type="domain">
    <text evidence="1">The B30.2/SPRY domain acts as a capsid recognition domain. Polymorphisms in this domain explain the observed species-specific differences among orthologs (By similarity).</text>
</comment>
<comment type="domain">
    <text evidence="1">The RING-type zinc finger domain confers E3 ubiquitin ligase activity and is essential for retrovirus restriction activity, autoubiquitination and higher-order multimerization.</text>
</comment>
<comment type="PTM">
    <text evidence="1">Degraded in a proteasome-independent fashion in the absence of viral infection but in a proteasome-dependent fashion following exposure to restriction sensitive virus.</text>
</comment>
<comment type="PTM">
    <text evidence="1">Autoubiquitinated in a RING finger- and UBE2D2-dependent manner. Monoubiquitinated by TRIM21. Deubiquitinated by Yersinia YopJ. Ubiquitination may not lead to proteasomal degradation (By similarity).</text>
</comment>
<comment type="similarity">
    <text evidence="8">Belongs to the TRIM/RBCC family.</text>
</comment>
<feature type="initiator methionine" description="Removed" evidence="3">
    <location>
        <position position="1"/>
    </location>
</feature>
<feature type="chain" id="PRO_0000273448" description="Tripartite motif-containing protein 5">
    <location>
        <begin position="2"/>
        <end position="551"/>
    </location>
</feature>
<feature type="domain" description="B30.2/SPRY" evidence="7">
    <location>
        <begin position="276"/>
        <end position="551"/>
    </location>
</feature>
<feature type="zinc finger region" description="RING-type" evidence="6">
    <location>
        <begin position="15"/>
        <end position="55"/>
    </location>
</feature>
<feature type="zinc finger region" description="B box-type" evidence="5">
    <location>
        <begin position="87"/>
        <end position="128"/>
    </location>
</feature>
<feature type="region of interest" description="Required for interaction with GABARAP and for autophagy" evidence="2">
    <location>
        <begin position="182"/>
        <end position="195"/>
    </location>
</feature>
<feature type="coiled-coil region" evidence="4">
    <location>
        <begin position="127"/>
        <end position="221"/>
    </location>
</feature>
<feature type="binding site" evidence="5">
    <location>
        <position position="92"/>
    </location>
    <ligand>
        <name>Zn(2+)</name>
        <dbReference type="ChEBI" id="CHEBI:29105"/>
    </ligand>
</feature>
<feature type="binding site" evidence="5">
    <location>
        <position position="95"/>
    </location>
    <ligand>
        <name>Zn(2+)</name>
        <dbReference type="ChEBI" id="CHEBI:29105"/>
    </ligand>
</feature>
<feature type="binding site" evidence="5">
    <location>
        <position position="114"/>
    </location>
    <ligand>
        <name>Zn(2+)</name>
        <dbReference type="ChEBI" id="CHEBI:29105"/>
    </ligand>
</feature>
<feature type="binding site" evidence="5">
    <location>
        <position position="120"/>
    </location>
    <ligand>
        <name>Zn(2+)</name>
        <dbReference type="ChEBI" id="CHEBI:29105"/>
    </ligand>
</feature>
<feature type="modified residue" description="N-acetylalanine" evidence="3">
    <location>
        <position position="2"/>
    </location>
</feature>
<feature type="modified residue" description="Phosphoserine" evidence="3">
    <location>
        <position position="82"/>
    </location>
</feature>
<accession>Q5D7I6</accession>
<organism>
    <name type="scientific">Alouatta sara</name>
    <name type="common">Bolivian red howler monkey</name>
    <dbReference type="NCBI Taxonomy" id="121123"/>
    <lineage>
        <taxon>Eukaryota</taxon>
        <taxon>Metazoa</taxon>
        <taxon>Chordata</taxon>
        <taxon>Craniata</taxon>
        <taxon>Vertebrata</taxon>
        <taxon>Euteleostomi</taxon>
        <taxon>Mammalia</taxon>
        <taxon>Eutheria</taxon>
        <taxon>Euarchontoglires</taxon>
        <taxon>Primates</taxon>
        <taxon>Haplorrhini</taxon>
        <taxon>Platyrrhini</taxon>
        <taxon>Atelidae</taxon>
        <taxon>Alouattinae</taxon>
        <taxon>Alouatta</taxon>
    </lineage>
</organism>
<sequence length="551" mass="63521">MASKILVNIKEEVTCPICLELLTEPLSLDCGHSFCQACITANHKESRERSCPLCRVSYHSENLRPNRHLANIAERLREVMLSPEEGQKVDRCARHGEKLLLFCQQHGNVICWLCERSEEHRGHRTSLVEEVAQKYREKLQAALEMMRQKEQDAEMLEADVREEQASWKIQIENDKTSTLAEFKQLRDILDCEESNELQKLEKEEENLLKRLVQSENDMVLQTQSIRVLIADLERRLQGSVMELLQGVEGVIKRIKNVTLQKPETFLNEKRRVFQAPDLKGMLQVFKELKEVQCYWAHVTLIPNHPSCTVISEDKREVRYQEQIHHHPSMEVKYFYGILGSPSITSGKHYWEVDVSNKSAWILGVCVSLKCIGNFPGIENYQPQNGYWVIGLRNADNYSAFQDAVPETENYQPKNRNRFTGLQNADNCSAFQNAFPGIQSYQPKKSHLFTGLQNLSNYNAFQNKVQYNYIDFQDDSLSTPSAPLIVPLFMTICPKRVGVFLDYEACTVSFFNVTSNGYLIYKFSNCQFSYPVFPYFSPMTCELPMTLCSPSS</sequence>
<protein>
    <recommendedName>
        <fullName>Tripartite motif-containing protein 5</fullName>
        <ecNumber>2.3.2.27</ecNumber>
    </recommendedName>
    <alternativeName>
        <fullName evidence="8">RING-type E3 ubiquitin transferase TRIM5</fullName>
    </alternativeName>
    <alternativeName>
        <fullName>TRIM5alpha</fullName>
    </alternativeName>
</protein>
<gene>
    <name type="primary">TRIM5</name>
</gene>
<reference key="1">
    <citation type="journal article" date="2005" name="Proc. Natl. Acad. Sci. U.S.A.">
        <title>Positive selection of primate TRIM5alpha identifies a critical species-specific retroviral restriction domain.</title>
        <authorList>
            <person name="Sawyer S.L."/>
            <person name="Wu L.I."/>
            <person name="Emerman M."/>
            <person name="Malik H.S."/>
        </authorList>
    </citation>
    <scope>NUCLEOTIDE SEQUENCE [GENOMIC DNA]</scope>
</reference>
<dbReference type="EC" id="2.3.2.27"/>
<dbReference type="EMBL" id="AY843511">
    <property type="protein sequence ID" value="AAV91982.1"/>
    <property type="molecule type" value="Genomic_DNA"/>
</dbReference>
<dbReference type="SMR" id="Q5D7I6"/>
<dbReference type="UniPathway" id="UPA00143"/>
<dbReference type="GO" id="GO:0005634">
    <property type="term" value="C:nucleus"/>
    <property type="evidence" value="ECO:0007669"/>
    <property type="project" value="UniProtKB-SubCell"/>
</dbReference>
<dbReference type="GO" id="GO:0000932">
    <property type="term" value="C:P-body"/>
    <property type="evidence" value="ECO:0000250"/>
    <property type="project" value="UniProtKB"/>
</dbReference>
<dbReference type="GO" id="GO:0038187">
    <property type="term" value="F:pattern recognition receptor activity"/>
    <property type="evidence" value="ECO:0000250"/>
    <property type="project" value="UniProtKB"/>
</dbReference>
<dbReference type="GO" id="GO:0004842">
    <property type="term" value="F:ubiquitin-protein transferase activity"/>
    <property type="evidence" value="ECO:0000250"/>
    <property type="project" value="UniProtKB"/>
</dbReference>
<dbReference type="GO" id="GO:0008270">
    <property type="term" value="F:zinc ion binding"/>
    <property type="evidence" value="ECO:0007669"/>
    <property type="project" value="UniProtKB-KW"/>
</dbReference>
<dbReference type="GO" id="GO:0002218">
    <property type="term" value="P:activation of innate immune response"/>
    <property type="evidence" value="ECO:0000250"/>
    <property type="project" value="UniProtKB"/>
</dbReference>
<dbReference type="GO" id="GO:0006914">
    <property type="term" value="P:autophagy"/>
    <property type="evidence" value="ECO:0007669"/>
    <property type="project" value="UniProtKB-KW"/>
</dbReference>
<dbReference type="GO" id="GO:0051607">
    <property type="term" value="P:defense response to virus"/>
    <property type="evidence" value="ECO:0007669"/>
    <property type="project" value="UniProtKB-KW"/>
</dbReference>
<dbReference type="GO" id="GO:0045087">
    <property type="term" value="P:innate immune response"/>
    <property type="evidence" value="ECO:0007669"/>
    <property type="project" value="UniProtKB-KW"/>
</dbReference>
<dbReference type="GO" id="GO:0043123">
    <property type="term" value="P:positive regulation of canonical NF-kappaB signal transduction"/>
    <property type="evidence" value="ECO:0000250"/>
    <property type="project" value="UniProtKB"/>
</dbReference>
<dbReference type="GO" id="GO:0043410">
    <property type="term" value="P:positive regulation of MAPK cascade"/>
    <property type="evidence" value="ECO:0000250"/>
    <property type="project" value="UniProtKB"/>
</dbReference>
<dbReference type="GO" id="GO:0051092">
    <property type="term" value="P:positive regulation of NF-kappaB transcription factor activity"/>
    <property type="evidence" value="ECO:0000250"/>
    <property type="project" value="UniProtKB"/>
</dbReference>
<dbReference type="GO" id="GO:0070534">
    <property type="term" value="P:protein K63-linked ubiquitination"/>
    <property type="evidence" value="ECO:0000250"/>
    <property type="project" value="UniProtKB"/>
</dbReference>
<dbReference type="GO" id="GO:0031664">
    <property type="term" value="P:regulation of lipopolysaccharide-mediated signaling pathway"/>
    <property type="evidence" value="ECO:0000250"/>
    <property type="project" value="UniProtKB"/>
</dbReference>
<dbReference type="CDD" id="cd19761">
    <property type="entry name" value="Bbox2_TRIM5-like"/>
    <property type="match status" value="1"/>
</dbReference>
<dbReference type="CDD" id="cd16591">
    <property type="entry name" value="RING-HC_TRIM5-like_C-IV"/>
    <property type="match status" value="1"/>
</dbReference>
<dbReference type="FunFam" id="3.30.160.60:FF:000386">
    <property type="entry name" value="Tripartite motif-containing 5 (Predicted)"/>
    <property type="match status" value="1"/>
</dbReference>
<dbReference type="FunFam" id="3.30.40.10:FF:000144">
    <property type="entry name" value="Tripartite motif-containing 5 (Predicted)"/>
    <property type="match status" value="1"/>
</dbReference>
<dbReference type="FunFam" id="2.60.120.920:FF:000107">
    <property type="entry name" value="Tripartite motif-containing protein 5"/>
    <property type="match status" value="1"/>
</dbReference>
<dbReference type="FunFam" id="2.60.120.920:FF:000108">
    <property type="entry name" value="Tripartite motif-containing protein 5"/>
    <property type="match status" value="1"/>
</dbReference>
<dbReference type="Gene3D" id="2.60.120.920">
    <property type="match status" value="2"/>
</dbReference>
<dbReference type="Gene3D" id="3.30.160.60">
    <property type="entry name" value="Classic Zinc Finger"/>
    <property type="match status" value="1"/>
</dbReference>
<dbReference type="Gene3D" id="3.30.40.10">
    <property type="entry name" value="Zinc/RING finger domain, C3HC4 (zinc finger)"/>
    <property type="match status" value="1"/>
</dbReference>
<dbReference type="InterPro" id="IPR001870">
    <property type="entry name" value="B30.2/SPRY"/>
</dbReference>
<dbReference type="InterPro" id="IPR043136">
    <property type="entry name" value="B30.2/SPRY_sf"/>
</dbReference>
<dbReference type="InterPro" id="IPR013320">
    <property type="entry name" value="ConA-like_dom_sf"/>
</dbReference>
<dbReference type="InterPro" id="IPR003877">
    <property type="entry name" value="SPRY_dom"/>
</dbReference>
<dbReference type="InterPro" id="IPR050143">
    <property type="entry name" value="TRIM/RBCC"/>
</dbReference>
<dbReference type="InterPro" id="IPR027370">
    <property type="entry name" value="Znf-RING_euk"/>
</dbReference>
<dbReference type="InterPro" id="IPR000315">
    <property type="entry name" value="Znf_B-box"/>
</dbReference>
<dbReference type="InterPro" id="IPR001841">
    <property type="entry name" value="Znf_RING"/>
</dbReference>
<dbReference type="InterPro" id="IPR013083">
    <property type="entry name" value="Znf_RING/FYVE/PHD"/>
</dbReference>
<dbReference type="InterPro" id="IPR017907">
    <property type="entry name" value="Znf_RING_CS"/>
</dbReference>
<dbReference type="PANTHER" id="PTHR24103">
    <property type="entry name" value="E3 UBIQUITIN-PROTEIN LIGASE TRIM"/>
    <property type="match status" value="1"/>
</dbReference>
<dbReference type="Pfam" id="PF00622">
    <property type="entry name" value="SPRY"/>
    <property type="match status" value="1"/>
</dbReference>
<dbReference type="Pfam" id="PF00643">
    <property type="entry name" value="zf-B_box"/>
    <property type="match status" value="1"/>
</dbReference>
<dbReference type="Pfam" id="PF13445">
    <property type="entry name" value="zf-RING_UBOX"/>
    <property type="match status" value="1"/>
</dbReference>
<dbReference type="SMART" id="SM00336">
    <property type="entry name" value="BBOX"/>
    <property type="match status" value="1"/>
</dbReference>
<dbReference type="SMART" id="SM00184">
    <property type="entry name" value="RING"/>
    <property type="match status" value="1"/>
</dbReference>
<dbReference type="SMART" id="SM00449">
    <property type="entry name" value="SPRY"/>
    <property type="match status" value="1"/>
</dbReference>
<dbReference type="SUPFAM" id="SSF57845">
    <property type="entry name" value="B-box zinc-binding domain"/>
    <property type="match status" value="1"/>
</dbReference>
<dbReference type="SUPFAM" id="SSF49899">
    <property type="entry name" value="Concanavalin A-like lectins/glucanases"/>
    <property type="match status" value="2"/>
</dbReference>
<dbReference type="SUPFAM" id="SSF57850">
    <property type="entry name" value="RING/U-box"/>
    <property type="match status" value="1"/>
</dbReference>
<dbReference type="PROSITE" id="PS50188">
    <property type="entry name" value="B302_SPRY"/>
    <property type="match status" value="1"/>
</dbReference>
<dbReference type="PROSITE" id="PS50119">
    <property type="entry name" value="ZF_BBOX"/>
    <property type="match status" value="1"/>
</dbReference>
<dbReference type="PROSITE" id="PS00518">
    <property type="entry name" value="ZF_RING_1"/>
    <property type="match status" value="1"/>
</dbReference>
<dbReference type="PROSITE" id="PS50089">
    <property type="entry name" value="ZF_RING_2"/>
    <property type="match status" value="1"/>
</dbReference>
<evidence type="ECO:0000250" key="1"/>
<evidence type="ECO:0000250" key="2">
    <source>
        <dbReference type="UniProtKB" id="Q0PF16"/>
    </source>
</evidence>
<evidence type="ECO:0000250" key="3">
    <source>
        <dbReference type="UniProtKB" id="Q9C035"/>
    </source>
</evidence>
<evidence type="ECO:0000255" key="4"/>
<evidence type="ECO:0000255" key="5">
    <source>
        <dbReference type="PROSITE-ProRule" id="PRU00024"/>
    </source>
</evidence>
<evidence type="ECO:0000255" key="6">
    <source>
        <dbReference type="PROSITE-ProRule" id="PRU00175"/>
    </source>
</evidence>
<evidence type="ECO:0000255" key="7">
    <source>
        <dbReference type="PROSITE-ProRule" id="PRU00548"/>
    </source>
</evidence>
<evidence type="ECO:0000305" key="8"/>
<proteinExistence type="inferred from homology"/>
<keyword id="KW-0007">Acetylation</keyword>
<keyword id="KW-0051">Antiviral defense</keyword>
<keyword id="KW-0072">Autophagy</keyword>
<keyword id="KW-0175">Coiled coil</keyword>
<keyword id="KW-0963">Cytoplasm</keyword>
<keyword id="KW-0391">Immunity</keyword>
<keyword id="KW-0399">Innate immunity</keyword>
<keyword id="KW-0479">Metal-binding</keyword>
<keyword id="KW-0539">Nucleus</keyword>
<keyword id="KW-0597">Phosphoprotein</keyword>
<keyword id="KW-0808">Transferase</keyword>
<keyword id="KW-0832">Ubl conjugation</keyword>
<keyword id="KW-0833">Ubl conjugation pathway</keyword>
<keyword id="KW-0862">Zinc</keyword>
<keyword id="KW-0863">Zinc-finger</keyword>
<name>TRIM5_ALOSA</name>